<feature type="chain" id="PRO_0000158512" description="Ribose-5-phosphate isomerase A">
    <location>
        <begin position="1"/>
        <end position="239"/>
    </location>
</feature>
<feature type="active site" description="Proton acceptor" evidence="1">
    <location>
        <position position="119"/>
    </location>
</feature>
<feature type="binding site" evidence="1">
    <location>
        <begin position="40"/>
        <end position="43"/>
    </location>
    <ligand>
        <name>substrate</name>
    </ligand>
</feature>
<feature type="binding site" evidence="1">
    <location>
        <begin position="96"/>
        <end position="99"/>
    </location>
    <ligand>
        <name>substrate</name>
    </ligand>
</feature>
<feature type="binding site" evidence="1">
    <location>
        <begin position="110"/>
        <end position="113"/>
    </location>
    <ligand>
        <name>substrate</name>
    </ligand>
</feature>
<feature type="binding site" evidence="1">
    <location>
        <position position="137"/>
    </location>
    <ligand>
        <name>substrate</name>
    </ligand>
</feature>
<keyword id="KW-0413">Isomerase</keyword>
<keyword id="KW-1185">Reference proteome</keyword>
<name>RPIA_METMP</name>
<evidence type="ECO:0000255" key="1">
    <source>
        <dbReference type="HAMAP-Rule" id="MF_00170"/>
    </source>
</evidence>
<dbReference type="EC" id="5.3.1.6" evidence="1"/>
<dbReference type="EMBL" id="BX950229">
    <property type="protein sequence ID" value="CAF30745.1"/>
    <property type="molecule type" value="Genomic_DNA"/>
</dbReference>
<dbReference type="RefSeq" id="WP_011171133.1">
    <property type="nucleotide sequence ID" value="NC_005791.1"/>
</dbReference>
<dbReference type="SMR" id="Q6LY04"/>
<dbReference type="STRING" id="267377.MMP1189"/>
<dbReference type="EnsemblBacteria" id="CAF30745">
    <property type="protein sequence ID" value="CAF30745"/>
    <property type="gene ID" value="MMP1189"/>
</dbReference>
<dbReference type="GeneID" id="41279768"/>
<dbReference type="KEGG" id="mmp:MMP1189"/>
<dbReference type="PATRIC" id="fig|267377.15.peg.1222"/>
<dbReference type="eggNOG" id="arCOG01122">
    <property type="taxonomic scope" value="Archaea"/>
</dbReference>
<dbReference type="HOGENOM" id="CLU_056590_1_1_2"/>
<dbReference type="OrthoDB" id="19013at2157"/>
<dbReference type="UniPathway" id="UPA00115">
    <property type="reaction ID" value="UER00412"/>
</dbReference>
<dbReference type="Proteomes" id="UP000000590">
    <property type="component" value="Chromosome"/>
</dbReference>
<dbReference type="GO" id="GO:0005829">
    <property type="term" value="C:cytosol"/>
    <property type="evidence" value="ECO:0007669"/>
    <property type="project" value="TreeGrafter"/>
</dbReference>
<dbReference type="GO" id="GO:0004751">
    <property type="term" value="F:ribose-5-phosphate isomerase activity"/>
    <property type="evidence" value="ECO:0007669"/>
    <property type="project" value="UniProtKB-UniRule"/>
</dbReference>
<dbReference type="GO" id="GO:0006014">
    <property type="term" value="P:D-ribose metabolic process"/>
    <property type="evidence" value="ECO:0007669"/>
    <property type="project" value="TreeGrafter"/>
</dbReference>
<dbReference type="GO" id="GO:0009052">
    <property type="term" value="P:pentose-phosphate shunt, non-oxidative branch"/>
    <property type="evidence" value="ECO:0007669"/>
    <property type="project" value="UniProtKB-UniRule"/>
</dbReference>
<dbReference type="CDD" id="cd01398">
    <property type="entry name" value="RPI_A"/>
    <property type="match status" value="1"/>
</dbReference>
<dbReference type="FunFam" id="3.40.50.1360:FF:000001">
    <property type="entry name" value="Ribose-5-phosphate isomerase A"/>
    <property type="match status" value="1"/>
</dbReference>
<dbReference type="Gene3D" id="3.30.70.260">
    <property type="match status" value="1"/>
</dbReference>
<dbReference type="Gene3D" id="3.40.50.1360">
    <property type="match status" value="1"/>
</dbReference>
<dbReference type="HAMAP" id="MF_00170">
    <property type="entry name" value="Rib_5P_isom_A"/>
    <property type="match status" value="1"/>
</dbReference>
<dbReference type="InterPro" id="IPR037171">
    <property type="entry name" value="NagB/RpiA_transferase-like"/>
</dbReference>
<dbReference type="InterPro" id="IPR020672">
    <property type="entry name" value="Ribose5P_isomerase_typA_subgr"/>
</dbReference>
<dbReference type="InterPro" id="IPR004788">
    <property type="entry name" value="Ribose5P_isomerase_type_A"/>
</dbReference>
<dbReference type="NCBIfam" id="NF001924">
    <property type="entry name" value="PRK00702.1"/>
    <property type="match status" value="1"/>
</dbReference>
<dbReference type="NCBIfam" id="TIGR00021">
    <property type="entry name" value="rpiA"/>
    <property type="match status" value="1"/>
</dbReference>
<dbReference type="PANTHER" id="PTHR11934">
    <property type="entry name" value="RIBOSE-5-PHOSPHATE ISOMERASE"/>
    <property type="match status" value="1"/>
</dbReference>
<dbReference type="PANTHER" id="PTHR11934:SF0">
    <property type="entry name" value="RIBOSE-5-PHOSPHATE ISOMERASE"/>
    <property type="match status" value="1"/>
</dbReference>
<dbReference type="Pfam" id="PF06026">
    <property type="entry name" value="Rib_5-P_isom_A"/>
    <property type="match status" value="1"/>
</dbReference>
<dbReference type="SUPFAM" id="SSF75445">
    <property type="entry name" value="D-ribose-5-phosphate isomerase (RpiA), lid domain"/>
    <property type="match status" value="1"/>
</dbReference>
<dbReference type="SUPFAM" id="SSF100950">
    <property type="entry name" value="NagB/RpiA/CoA transferase-like"/>
    <property type="match status" value="1"/>
</dbReference>
<organism>
    <name type="scientific">Methanococcus maripaludis (strain DSM 14266 / JCM 13030 / NBRC 101832 / S2 / LL)</name>
    <dbReference type="NCBI Taxonomy" id="267377"/>
    <lineage>
        <taxon>Archaea</taxon>
        <taxon>Methanobacteriati</taxon>
        <taxon>Methanobacteriota</taxon>
        <taxon>Methanomada group</taxon>
        <taxon>Methanococci</taxon>
        <taxon>Methanococcales</taxon>
        <taxon>Methanococcaceae</taxon>
        <taxon>Methanococcus</taxon>
    </lineage>
</organism>
<protein>
    <recommendedName>
        <fullName evidence="1">Ribose-5-phosphate isomerase A</fullName>
        <ecNumber evidence="1">5.3.1.6</ecNumber>
    </recommendedName>
    <alternativeName>
        <fullName evidence="1">Phosphoriboisomerase A</fullName>
        <shortName evidence="1">PRI</shortName>
    </alternativeName>
</protein>
<reference key="1">
    <citation type="journal article" date="2004" name="J. Bacteriol.">
        <title>Complete genome sequence of the genetically tractable hydrogenotrophic methanogen Methanococcus maripaludis.</title>
        <authorList>
            <person name="Hendrickson E.L."/>
            <person name="Kaul R."/>
            <person name="Zhou Y."/>
            <person name="Bovee D."/>
            <person name="Chapman P."/>
            <person name="Chung J."/>
            <person name="Conway de Macario E."/>
            <person name="Dodsworth J.A."/>
            <person name="Gillett W."/>
            <person name="Graham D.E."/>
            <person name="Hackett M."/>
            <person name="Haydock A.K."/>
            <person name="Kang A."/>
            <person name="Land M.L."/>
            <person name="Levy R."/>
            <person name="Lie T.J."/>
            <person name="Major T.A."/>
            <person name="Moore B.C."/>
            <person name="Porat I."/>
            <person name="Palmeiri A."/>
            <person name="Rouse G."/>
            <person name="Saenphimmachak C."/>
            <person name="Soell D."/>
            <person name="Van Dien S."/>
            <person name="Wang T."/>
            <person name="Whitman W.B."/>
            <person name="Xia Q."/>
            <person name="Zhang Y."/>
            <person name="Larimer F.W."/>
            <person name="Olson M.V."/>
            <person name="Leigh J.A."/>
        </authorList>
    </citation>
    <scope>NUCLEOTIDE SEQUENCE [LARGE SCALE GENOMIC DNA]</scope>
    <source>
        <strain>DSM 14266 / JCM 13030 / NBRC 101832 / S2 / LL</strain>
    </source>
</reference>
<accession>Q6LY04</accession>
<comment type="function">
    <text evidence="1">Catalyzes the reversible conversion of ribose-5-phosphate to ribulose 5-phosphate.</text>
</comment>
<comment type="catalytic activity">
    <reaction evidence="1">
        <text>aldehydo-D-ribose 5-phosphate = D-ribulose 5-phosphate</text>
        <dbReference type="Rhea" id="RHEA:14657"/>
        <dbReference type="ChEBI" id="CHEBI:58121"/>
        <dbReference type="ChEBI" id="CHEBI:58273"/>
        <dbReference type="EC" id="5.3.1.6"/>
    </reaction>
</comment>
<comment type="pathway">
    <text evidence="1">Carbohydrate degradation; pentose phosphate pathway; D-ribose 5-phosphate from D-ribulose 5-phosphate (non-oxidative stage): step 1/1.</text>
</comment>
<comment type="subunit">
    <text evidence="1">Homodimer.</text>
</comment>
<comment type="similarity">
    <text evidence="1">Belongs to the ribose 5-phosphate isomerase family.</text>
</comment>
<gene>
    <name evidence="1" type="primary">rpiA</name>
    <name type="ordered locus">MMP1189</name>
</gene>
<proteinExistence type="inferred from homology"/>
<sequence length="239" mass="25658">MARTKKANDEVATDSDSLKLKVAKQAAKLVKDEMVVGLGSGSTANLFIQELGKRVVEEELYIYGVPTSFDSRMMASNSGIPLISLDQCGEIDIAIDGADEVCKKTLSLIKGGGGCHTMEKIVDYHAKEFVVLADEGKLVESLGDKTAVPLEVIPFAYSTVLNKLLDMNTAPAIRSGSGKMGPVITDNGNMIIDVFINIEDAEETETMLNNIPGVLENGIFSKCDKVLVGTSKKVEILKK</sequence>